<evidence type="ECO:0000255" key="1">
    <source>
        <dbReference type="HAMAP-Rule" id="MF_01323"/>
    </source>
</evidence>
<evidence type="ECO:0000305" key="2"/>
<dbReference type="EC" id="2.7.7.6" evidence="1"/>
<dbReference type="EMBL" id="AE017126">
    <property type="protein sequence ID" value="AAQ00683.1"/>
    <property type="molecule type" value="Genomic_DNA"/>
</dbReference>
<dbReference type="EMBL" id="Z11160">
    <property type="protein sequence ID" value="CAA77511.1"/>
    <property type="molecule type" value="Genomic_DNA"/>
</dbReference>
<dbReference type="PIR" id="S20585">
    <property type="entry name" value="S20585"/>
</dbReference>
<dbReference type="RefSeq" id="NP_876030.1">
    <property type="nucleotide sequence ID" value="NC_005042.1"/>
</dbReference>
<dbReference type="RefSeq" id="WP_011125789.1">
    <property type="nucleotide sequence ID" value="NC_005042.1"/>
</dbReference>
<dbReference type="SMR" id="P42076"/>
<dbReference type="STRING" id="167539.Pro_1639"/>
<dbReference type="EnsemblBacteria" id="AAQ00683">
    <property type="protein sequence ID" value="AAQ00683"/>
    <property type="gene ID" value="Pro_1639"/>
</dbReference>
<dbReference type="KEGG" id="pma:Pro_1639"/>
<dbReference type="PATRIC" id="fig|167539.5.peg.1733"/>
<dbReference type="eggNOG" id="COG0086">
    <property type="taxonomic scope" value="Bacteria"/>
</dbReference>
<dbReference type="HOGENOM" id="CLU_030022_2_0_3"/>
<dbReference type="OrthoDB" id="9815296at2"/>
<dbReference type="Proteomes" id="UP000001420">
    <property type="component" value="Chromosome"/>
</dbReference>
<dbReference type="GO" id="GO:0000428">
    <property type="term" value="C:DNA-directed RNA polymerase complex"/>
    <property type="evidence" value="ECO:0007669"/>
    <property type="project" value="UniProtKB-KW"/>
</dbReference>
<dbReference type="GO" id="GO:0003677">
    <property type="term" value="F:DNA binding"/>
    <property type="evidence" value="ECO:0007669"/>
    <property type="project" value="UniProtKB-UniRule"/>
</dbReference>
<dbReference type="GO" id="GO:0003899">
    <property type="term" value="F:DNA-directed RNA polymerase activity"/>
    <property type="evidence" value="ECO:0007669"/>
    <property type="project" value="UniProtKB-UniRule"/>
</dbReference>
<dbReference type="GO" id="GO:0000287">
    <property type="term" value="F:magnesium ion binding"/>
    <property type="evidence" value="ECO:0007669"/>
    <property type="project" value="UniProtKB-UniRule"/>
</dbReference>
<dbReference type="GO" id="GO:0008270">
    <property type="term" value="F:zinc ion binding"/>
    <property type="evidence" value="ECO:0007669"/>
    <property type="project" value="UniProtKB-UniRule"/>
</dbReference>
<dbReference type="GO" id="GO:0006351">
    <property type="term" value="P:DNA-templated transcription"/>
    <property type="evidence" value="ECO:0007669"/>
    <property type="project" value="UniProtKB-UniRule"/>
</dbReference>
<dbReference type="Gene3D" id="1.10.40.90">
    <property type="match status" value="1"/>
</dbReference>
<dbReference type="Gene3D" id="2.40.40.20">
    <property type="match status" value="1"/>
</dbReference>
<dbReference type="Gene3D" id="4.10.860.120">
    <property type="entry name" value="RNA polymerase II, clamp domain"/>
    <property type="match status" value="1"/>
</dbReference>
<dbReference type="Gene3D" id="1.10.274.100">
    <property type="entry name" value="RNA polymerase Rpb1, domain 3"/>
    <property type="match status" value="1"/>
</dbReference>
<dbReference type="HAMAP" id="MF_01323">
    <property type="entry name" value="RNApol_bact_RpoC1"/>
    <property type="match status" value="1"/>
</dbReference>
<dbReference type="InterPro" id="IPR012755">
    <property type="entry name" value="DNA-dir_RpoC1_gamma"/>
</dbReference>
<dbReference type="InterPro" id="IPR045867">
    <property type="entry name" value="DNA-dir_RpoC_beta_prime"/>
</dbReference>
<dbReference type="InterPro" id="IPR000722">
    <property type="entry name" value="RNA_pol_asu"/>
</dbReference>
<dbReference type="InterPro" id="IPR006592">
    <property type="entry name" value="RNA_pol_N"/>
</dbReference>
<dbReference type="InterPro" id="IPR007080">
    <property type="entry name" value="RNA_pol_Rpb1_1"/>
</dbReference>
<dbReference type="InterPro" id="IPR007066">
    <property type="entry name" value="RNA_pol_Rpb1_3"/>
</dbReference>
<dbReference type="InterPro" id="IPR042102">
    <property type="entry name" value="RNA_pol_Rpb1_3_sf"/>
</dbReference>
<dbReference type="InterPro" id="IPR044893">
    <property type="entry name" value="RNA_pol_Rpb1_clamp_domain"/>
</dbReference>
<dbReference type="InterPro" id="IPR034678">
    <property type="entry name" value="RNApol_RpoC1"/>
</dbReference>
<dbReference type="NCBIfam" id="NF002729">
    <property type="entry name" value="PRK02625.1"/>
    <property type="match status" value="1"/>
</dbReference>
<dbReference type="NCBIfam" id="TIGR02387">
    <property type="entry name" value="rpoC1_cyan"/>
    <property type="match status" value="1"/>
</dbReference>
<dbReference type="PANTHER" id="PTHR19376">
    <property type="entry name" value="DNA-DIRECTED RNA POLYMERASE"/>
    <property type="match status" value="1"/>
</dbReference>
<dbReference type="PANTHER" id="PTHR19376:SF54">
    <property type="entry name" value="DNA-DIRECTED RNA POLYMERASE SUBUNIT BETA"/>
    <property type="match status" value="1"/>
</dbReference>
<dbReference type="Pfam" id="PF04997">
    <property type="entry name" value="RNA_pol_Rpb1_1"/>
    <property type="match status" value="1"/>
</dbReference>
<dbReference type="Pfam" id="PF00623">
    <property type="entry name" value="RNA_pol_Rpb1_2"/>
    <property type="match status" value="1"/>
</dbReference>
<dbReference type="Pfam" id="PF04983">
    <property type="entry name" value="RNA_pol_Rpb1_3"/>
    <property type="match status" value="1"/>
</dbReference>
<dbReference type="SMART" id="SM00663">
    <property type="entry name" value="RPOLA_N"/>
    <property type="match status" value="1"/>
</dbReference>
<dbReference type="SUPFAM" id="SSF64484">
    <property type="entry name" value="beta and beta-prime subunits of DNA dependent RNA-polymerase"/>
    <property type="match status" value="1"/>
</dbReference>
<proteinExistence type="inferred from homology"/>
<keyword id="KW-0240">DNA-directed RNA polymerase</keyword>
<keyword id="KW-0460">Magnesium</keyword>
<keyword id="KW-0479">Metal-binding</keyword>
<keyword id="KW-0548">Nucleotidyltransferase</keyword>
<keyword id="KW-1185">Reference proteome</keyword>
<keyword id="KW-0804">Transcription</keyword>
<keyword id="KW-0808">Transferase</keyword>
<keyword id="KW-0862">Zinc</keyword>
<feature type="chain" id="PRO_0000067845" description="DNA-directed RNA polymerase subunit gamma">
    <location>
        <begin position="1"/>
        <end position="634"/>
    </location>
</feature>
<feature type="binding site" evidence="1">
    <location>
        <position position="74"/>
    </location>
    <ligand>
        <name>Zn(2+)</name>
        <dbReference type="ChEBI" id="CHEBI:29105"/>
    </ligand>
</feature>
<feature type="binding site" evidence="1">
    <location>
        <position position="76"/>
    </location>
    <ligand>
        <name>Zn(2+)</name>
        <dbReference type="ChEBI" id="CHEBI:29105"/>
    </ligand>
</feature>
<feature type="binding site" evidence="1">
    <location>
        <position position="89"/>
    </location>
    <ligand>
        <name>Zn(2+)</name>
        <dbReference type="ChEBI" id="CHEBI:29105"/>
    </ligand>
</feature>
<feature type="binding site" evidence="1">
    <location>
        <position position="92"/>
    </location>
    <ligand>
        <name>Zn(2+)</name>
        <dbReference type="ChEBI" id="CHEBI:29105"/>
    </ligand>
</feature>
<feature type="binding site" evidence="1">
    <location>
        <position position="471"/>
    </location>
    <ligand>
        <name>Mg(2+)</name>
        <dbReference type="ChEBI" id="CHEBI:18420"/>
    </ligand>
</feature>
<feature type="binding site" evidence="1">
    <location>
        <position position="473"/>
    </location>
    <ligand>
        <name>Mg(2+)</name>
        <dbReference type="ChEBI" id="CHEBI:18420"/>
    </ligand>
</feature>
<feature type="binding site" evidence="1">
    <location>
        <position position="475"/>
    </location>
    <ligand>
        <name>Mg(2+)</name>
        <dbReference type="ChEBI" id="CHEBI:18420"/>
    </ligand>
</feature>
<feature type="sequence conflict" description="In Ref. 2; CAA77511." evidence="2" ref="2">
    <original>N</original>
    <variation>K</variation>
    <location>
        <position position="110"/>
    </location>
</feature>
<feature type="sequence conflict" description="In Ref. 2; CAA77511." evidence="2" ref="2">
    <original>E</original>
    <variation>A</variation>
    <location>
        <position position="153"/>
    </location>
</feature>
<feature type="sequence conflict" description="In Ref. 2; CAA77511." evidence="2" ref="2">
    <original>K</original>
    <variation>Q</variation>
    <location>
        <position position="157"/>
    </location>
</feature>
<feature type="sequence conflict" description="In Ref. 2; CAA77511." evidence="2" ref="2">
    <original>V</original>
    <variation>I</variation>
    <location>
        <position position="173"/>
    </location>
</feature>
<feature type="sequence conflict" description="In Ref. 2; CAA77511." evidence="2" ref="2">
    <original>DLQE</original>
    <variation>ELPK</variation>
    <location>
        <begin position="205"/>
        <end position="208"/>
    </location>
</feature>
<feature type="sequence conflict" description="In Ref. 2; CAA77511." evidence="2" ref="2">
    <original>Q</original>
    <variation>E</variation>
    <location>
        <position position="212"/>
    </location>
</feature>
<feature type="sequence conflict" description="In Ref. 2; CAA77511." evidence="2" ref="2">
    <original>TG</original>
    <variation>SS</variation>
    <location>
        <begin position="218"/>
        <end position="219"/>
    </location>
</feature>
<feature type="sequence conflict" description="In Ref. 2; CAA77511." evidence="2" ref="2">
    <original>R</original>
    <variation>S</variation>
    <location>
        <position position="244"/>
    </location>
</feature>
<reference key="1">
    <citation type="journal article" date="2003" name="Proc. Natl. Acad. Sci. U.S.A.">
        <title>Genome sequence of the cyanobacterium Prochlorococcus marinus SS120, a nearly minimal oxyphototrophic genome.</title>
        <authorList>
            <person name="Dufresne A."/>
            <person name="Salanoubat M."/>
            <person name="Partensky F."/>
            <person name="Artiguenave F."/>
            <person name="Axmann I.M."/>
            <person name="Barbe V."/>
            <person name="Duprat S."/>
            <person name="Galperin M.Y."/>
            <person name="Koonin E.V."/>
            <person name="Le Gall F."/>
            <person name="Makarova K.S."/>
            <person name="Ostrowski M."/>
            <person name="Oztas S."/>
            <person name="Robert C."/>
            <person name="Rogozin I.B."/>
            <person name="Scanlan D.J."/>
            <person name="Tandeau de Marsac N."/>
            <person name="Weissenbach J."/>
            <person name="Wincker P."/>
            <person name="Wolf Y.I."/>
            <person name="Hess W.R."/>
        </authorList>
    </citation>
    <scope>NUCLEOTIDE SEQUENCE [LARGE SCALE GENOMIC DNA]</scope>
    <source>
        <strain>SARG / CCMP1375 / SS120</strain>
    </source>
</reference>
<reference key="2">
    <citation type="journal article" date="1992" name="Nature">
        <title>Multiple evolutionary origins of prochlorophytes, the chlorophyll b-containing prokaryotes.</title>
        <authorList>
            <person name="Palenik B."/>
            <person name="Haselkorn R."/>
        </authorList>
    </citation>
    <scope>NUCLEOTIDE SEQUENCE [GENOMIC DNA] OF 41-244</scope>
    <source>
        <strain>LG</strain>
    </source>
</reference>
<comment type="function">
    <text evidence="1">DNA-dependent RNA polymerase catalyzes the transcription of DNA into RNA using the four ribonucleoside triphosphates as substrates.</text>
</comment>
<comment type="catalytic activity">
    <reaction evidence="1">
        <text>RNA(n) + a ribonucleoside 5'-triphosphate = RNA(n+1) + diphosphate</text>
        <dbReference type="Rhea" id="RHEA:21248"/>
        <dbReference type="Rhea" id="RHEA-COMP:14527"/>
        <dbReference type="Rhea" id="RHEA-COMP:17342"/>
        <dbReference type="ChEBI" id="CHEBI:33019"/>
        <dbReference type="ChEBI" id="CHEBI:61557"/>
        <dbReference type="ChEBI" id="CHEBI:140395"/>
        <dbReference type="EC" id="2.7.7.6"/>
    </reaction>
</comment>
<comment type="cofactor">
    <cofactor evidence="1">
        <name>Mg(2+)</name>
        <dbReference type="ChEBI" id="CHEBI:18420"/>
    </cofactor>
    <text evidence="1">Binds 1 Mg(2+) ion per subunit.</text>
</comment>
<comment type="cofactor">
    <cofactor evidence="1">
        <name>Zn(2+)</name>
        <dbReference type="ChEBI" id="CHEBI:29105"/>
    </cofactor>
    <text evidence="1">Binds 1 Zn(2+) ion per subunit.</text>
</comment>
<comment type="subunit">
    <text evidence="1">In cyanobacteria the RNAP catalytic core is composed of 2 alpha, 1 beta, 1 beta', 1 gamma and 1 omega subunit. When a sigma factor is associated with the core the holoenzyme is formed, which can initiate transcription.</text>
</comment>
<comment type="similarity">
    <text evidence="1">Belongs to the RNA polymerase beta' chain family. RpoC1 subfamily.</text>
</comment>
<gene>
    <name evidence="1" type="primary">rpoC1</name>
    <name type="synonym">rpoC</name>
    <name type="ordered locus">Pro_1639</name>
</gene>
<sequence length="634" mass="71995">MTNSNLRTENHFDYVKITLASPERVMSWGQRTLPNGQVVGEVTKPETINYRTLKPEMDGLFCEKIFGPSKDWECHCGKYKRVRHRGIVCERCGVEVTESRVRRHRMGFINLAAPVSHVWYLKGIPSYVAILLDMPLRDVEQIVYFNCYVVLDEGDHKDLKYKQLLTEDEWLEVEDEIYAEDSTIENEPVVGIGAEALKQLLEDLDLQEVAEQLREEITGSKGQKRAKLIKRLRVIDNFIATNARPEWMVLNAIPVIPPDLRPMVQLDGGRFATSDLNDLYRRVINRNNRLARLQEILAPEIIVRNEKRMLQEAVDALVDNGRRGRTVVGANNRALKSLSDIIEGKQGRFRQNLLGKRVDYSGRSVIVVGPKLKMHQCGLPKEMAIELFQPFVIHRLIRQNIVNNIKAAKKLIQRADDEVMQVLQEVIEGHPILLNRAPTLHRLGIQAFEPKLVAGRAIQLHPLVCPAFNADFDGDQMAVHVPLAIEAQTEARMLMLASNNILSPATGEPIVTPSQDMVLGSYYLTALQPDAVKPDFGDQSKTFAGLEDVIHAFEDKRINLHDWVWVRFNGEVEDDDELTSPLDTQILEDGTQIQQWTYRRDRLDEEGALISRFLLTTVGRVVMNNTIIDAVASG</sequence>
<organism>
    <name type="scientific">Prochlorococcus marinus (strain SARG / CCMP1375 / SS120)</name>
    <dbReference type="NCBI Taxonomy" id="167539"/>
    <lineage>
        <taxon>Bacteria</taxon>
        <taxon>Bacillati</taxon>
        <taxon>Cyanobacteriota</taxon>
        <taxon>Cyanophyceae</taxon>
        <taxon>Synechococcales</taxon>
        <taxon>Prochlorococcaceae</taxon>
        <taxon>Prochlorococcus</taxon>
    </lineage>
</organism>
<name>RPOC1_PROMA</name>
<accession>P42076</accession>
<protein>
    <recommendedName>
        <fullName evidence="1">DNA-directed RNA polymerase subunit gamma</fullName>
        <shortName evidence="1">RNAP subunit gamma</shortName>
        <ecNumber evidence="1">2.7.7.6</ecNumber>
    </recommendedName>
    <alternativeName>
        <fullName evidence="1">RNA polymerase subunit gamma</fullName>
    </alternativeName>
    <alternativeName>
        <fullName evidence="1">Transcriptase subunit gamma</fullName>
    </alternativeName>
</protein>